<proteinExistence type="inferred from homology"/>
<comment type="function">
    <text evidence="1">Regulates transcriptional attenuation of the pyrimidine nucleotide (pyr) operon by binding in a uridine-dependent manner to specific sites on pyr mRNA. This disrupts an antiterminator hairpin in the RNA and favors formation of a downstream transcription terminator, leading to a reduced expression of downstream genes.</text>
</comment>
<comment type="function">
    <text evidence="1">Also displays a weak uracil phosphoribosyltransferase activity which is not physiologically significant.</text>
</comment>
<comment type="catalytic activity">
    <reaction evidence="1">
        <text>UMP + diphosphate = 5-phospho-alpha-D-ribose 1-diphosphate + uracil</text>
        <dbReference type="Rhea" id="RHEA:13017"/>
        <dbReference type="ChEBI" id="CHEBI:17568"/>
        <dbReference type="ChEBI" id="CHEBI:33019"/>
        <dbReference type="ChEBI" id="CHEBI:57865"/>
        <dbReference type="ChEBI" id="CHEBI:58017"/>
        <dbReference type="EC" id="2.4.2.9"/>
    </reaction>
</comment>
<comment type="subunit">
    <text evidence="1">Homodimer and homohexamer; in equilibrium.</text>
</comment>
<comment type="similarity">
    <text evidence="1">Belongs to the purine/pyrimidine phosphoribosyltransferase family. PyrR subfamily.</text>
</comment>
<organism>
    <name type="scientific">Streptococcus pneumoniae serotype 19F (strain G54)</name>
    <dbReference type="NCBI Taxonomy" id="512566"/>
    <lineage>
        <taxon>Bacteria</taxon>
        <taxon>Bacillati</taxon>
        <taxon>Bacillota</taxon>
        <taxon>Bacilli</taxon>
        <taxon>Lactobacillales</taxon>
        <taxon>Streptococcaceae</taxon>
        <taxon>Streptococcus</taxon>
    </lineage>
</organism>
<protein>
    <recommendedName>
        <fullName evidence="1">Bifunctional protein PyrR</fullName>
    </recommendedName>
    <domain>
        <recommendedName>
            <fullName evidence="1">Pyrimidine operon regulatory protein</fullName>
        </recommendedName>
    </domain>
    <domain>
        <recommendedName>
            <fullName evidence="1">Uracil phosphoribosyltransferase</fullName>
            <shortName evidence="1">UPRTase</shortName>
            <ecNumber evidence="1">2.4.2.9</ecNumber>
        </recommendedName>
    </domain>
</protein>
<gene>
    <name evidence="1" type="primary">pyrR</name>
    <name type="ordered locus">SPG_1172</name>
</gene>
<keyword id="KW-0328">Glycosyltransferase</keyword>
<keyword id="KW-0694">RNA-binding</keyword>
<keyword id="KW-0804">Transcription</keyword>
<keyword id="KW-0805">Transcription regulation</keyword>
<keyword id="KW-0806">Transcription termination</keyword>
<keyword id="KW-0808">Transferase</keyword>
<reference key="1">
    <citation type="journal article" date="2001" name="Microb. Drug Resist.">
        <title>Annotated draft genomic sequence from a Streptococcus pneumoniae type 19F clinical isolate.</title>
        <authorList>
            <person name="Dopazo J."/>
            <person name="Mendoza A."/>
            <person name="Herrero J."/>
            <person name="Caldara F."/>
            <person name="Humbert Y."/>
            <person name="Friedli L."/>
            <person name="Guerrier M."/>
            <person name="Grand-Schenk E."/>
            <person name="Gandin C."/>
            <person name="de Francesco M."/>
            <person name="Polissi A."/>
            <person name="Buell G."/>
            <person name="Feger G."/>
            <person name="Garcia E."/>
            <person name="Peitsch M."/>
            <person name="Garcia-Bustos J.F."/>
        </authorList>
    </citation>
    <scope>NUCLEOTIDE SEQUENCE [LARGE SCALE GENOMIC DNA]</scope>
    <source>
        <strain>G54</strain>
    </source>
</reference>
<reference key="2">
    <citation type="submission" date="2008-03" db="EMBL/GenBank/DDBJ databases">
        <title>Pneumococcal beta glucoside metabolism investigated by whole genome comparison.</title>
        <authorList>
            <person name="Mulas L."/>
            <person name="Trappetti C."/>
            <person name="Hakenbeck R."/>
            <person name="Iannelli F."/>
            <person name="Pozzi G."/>
            <person name="Davidsen T.M."/>
            <person name="Tettelin H."/>
            <person name="Oggioni M."/>
        </authorList>
    </citation>
    <scope>NUCLEOTIDE SEQUENCE [LARGE SCALE GENOMIC DNA]</scope>
    <source>
        <strain>G54</strain>
    </source>
</reference>
<evidence type="ECO:0000255" key="1">
    <source>
        <dbReference type="HAMAP-Rule" id="MF_01219"/>
    </source>
</evidence>
<dbReference type="EC" id="2.4.2.9" evidence="1"/>
<dbReference type="EMBL" id="CP001015">
    <property type="protein sequence ID" value="ACF56574.1"/>
    <property type="molecule type" value="Genomic_DNA"/>
</dbReference>
<dbReference type="SMR" id="B5E515"/>
<dbReference type="KEGG" id="spx:SPG_1172"/>
<dbReference type="HOGENOM" id="CLU_094234_2_1_9"/>
<dbReference type="GO" id="GO:0003723">
    <property type="term" value="F:RNA binding"/>
    <property type="evidence" value="ECO:0007669"/>
    <property type="project" value="UniProtKB-UniRule"/>
</dbReference>
<dbReference type="GO" id="GO:0004845">
    <property type="term" value="F:uracil phosphoribosyltransferase activity"/>
    <property type="evidence" value="ECO:0007669"/>
    <property type="project" value="UniProtKB-UniRule"/>
</dbReference>
<dbReference type="GO" id="GO:0006353">
    <property type="term" value="P:DNA-templated transcription termination"/>
    <property type="evidence" value="ECO:0007669"/>
    <property type="project" value="UniProtKB-UniRule"/>
</dbReference>
<dbReference type="CDD" id="cd06223">
    <property type="entry name" value="PRTases_typeI"/>
    <property type="match status" value="1"/>
</dbReference>
<dbReference type="FunFam" id="3.40.50.2020:FF:000020">
    <property type="entry name" value="Bifunctional protein PyrR"/>
    <property type="match status" value="1"/>
</dbReference>
<dbReference type="Gene3D" id="3.40.50.2020">
    <property type="match status" value="1"/>
</dbReference>
<dbReference type="HAMAP" id="MF_01219">
    <property type="entry name" value="PyrR"/>
    <property type="match status" value="1"/>
</dbReference>
<dbReference type="InterPro" id="IPR000836">
    <property type="entry name" value="PRibTrfase_dom"/>
</dbReference>
<dbReference type="InterPro" id="IPR029057">
    <property type="entry name" value="PRTase-like"/>
</dbReference>
<dbReference type="InterPro" id="IPR023050">
    <property type="entry name" value="PyrR"/>
</dbReference>
<dbReference type="InterPro" id="IPR050137">
    <property type="entry name" value="PyrR_bifunctional"/>
</dbReference>
<dbReference type="NCBIfam" id="NF003548">
    <property type="entry name" value="PRK05205.1-4"/>
    <property type="match status" value="1"/>
</dbReference>
<dbReference type="NCBIfam" id="NF003549">
    <property type="entry name" value="PRK05205.1-5"/>
    <property type="match status" value="1"/>
</dbReference>
<dbReference type="PANTHER" id="PTHR11608">
    <property type="entry name" value="BIFUNCTIONAL PROTEIN PYRR"/>
    <property type="match status" value="1"/>
</dbReference>
<dbReference type="PANTHER" id="PTHR11608:SF0">
    <property type="entry name" value="BIFUNCTIONAL PROTEIN PYRR"/>
    <property type="match status" value="1"/>
</dbReference>
<dbReference type="Pfam" id="PF00156">
    <property type="entry name" value="Pribosyltran"/>
    <property type="match status" value="1"/>
</dbReference>
<dbReference type="SUPFAM" id="SSF53271">
    <property type="entry name" value="PRTase-like"/>
    <property type="match status" value="1"/>
</dbReference>
<feature type="chain" id="PRO_1000139209" description="Bifunctional protein PyrR">
    <location>
        <begin position="1"/>
        <end position="173"/>
    </location>
</feature>
<feature type="short sequence motif" description="PRPP-binding" evidence="1">
    <location>
        <begin position="93"/>
        <end position="105"/>
    </location>
</feature>
<name>PYRR_STRP4</name>
<accession>B5E515</accession>
<sequence>MKTKEVVDELTVKRAITRITYEIIERNKDLNKIVLAGIKTRGVFIAHRIQERLKQLENLSVPVVELDTKPFRDDVKSGEDTSLVSVDVTDREVILVDDVLYTGRTIRAAIDNIVGHGRPARVSLAVLVDRGHRELPIRPDYVGKNIPTSRSEEIIVEMTELDDQDRVLITEEA</sequence>